<accession>A7H4T6</accession>
<evidence type="ECO:0000255" key="1">
    <source>
        <dbReference type="HAMAP-Rule" id="MF_00823"/>
    </source>
</evidence>
<evidence type="ECO:0000255" key="2">
    <source>
        <dbReference type="PROSITE-ProRule" id="PRU01137"/>
    </source>
</evidence>
<organism>
    <name type="scientific">Campylobacter jejuni subsp. doylei (strain ATCC BAA-1458 / RM4099 / 269.97)</name>
    <dbReference type="NCBI Taxonomy" id="360109"/>
    <lineage>
        <taxon>Bacteria</taxon>
        <taxon>Pseudomonadati</taxon>
        <taxon>Campylobacterota</taxon>
        <taxon>Epsilonproteobacteria</taxon>
        <taxon>Campylobacterales</taxon>
        <taxon>Campylobacteraceae</taxon>
        <taxon>Campylobacter</taxon>
    </lineage>
</organism>
<keyword id="KW-0067">ATP-binding</keyword>
<keyword id="KW-0963">Cytoplasm</keyword>
<keyword id="KW-0275">Fatty acid biosynthesis</keyword>
<keyword id="KW-0276">Fatty acid metabolism</keyword>
<keyword id="KW-0444">Lipid biosynthesis</keyword>
<keyword id="KW-0443">Lipid metabolism</keyword>
<keyword id="KW-0547">Nucleotide-binding</keyword>
<keyword id="KW-0808">Transferase</keyword>
<protein>
    <recommendedName>
        <fullName evidence="1">Acetyl-coenzyme A carboxylase carboxyl transferase subunit alpha</fullName>
        <shortName evidence="1">ACCase subunit alpha</shortName>
        <shortName evidence="1">Acetyl-CoA carboxylase carboxyltransferase subunit alpha</shortName>
        <ecNumber evidence="1">2.1.3.15</ecNumber>
    </recommendedName>
</protein>
<dbReference type="EC" id="2.1.3.15" evidence="1"/>
<dbReference type="EMBL" id="CP000768">
    <property type="protein sequence ID" value="ABS44486.1"/>
    <property type="molecule type" value="Genomic_DNA"/>
</dbReference>
<dbReference type="SMR" id="A7H4T6"/>
<dbReference type="KEGG" id="cjd:JJD26997_1494"/>
<dbReference type="HOGENOM" id="CLU_015486_0_2_7"/>
<dbReference type="UniPathway" id="UPA00655">
    <property type="reaction ID" value="UER00711"/>
</dbReference>
<dbReference type="Proteomes" id="UP000002302">
    <property type="component" value="Chromosome"/>
</dbReference>
<dbReference type="GO" id="GO:0009317">
    <property type="term" value="C:acetyl-CoA carboxylase complex"/>
    <property type="evidence" value="ECO:0007669"/>
    <property type="project" value="InterPro"/>
</dbReference>
<dbReference type="GO" id="GO:0003989">
    <property type="term" value="F:acetyl-CoA carboxylase activity"/>
    <property type="evidence" value="ECO:0007669"/>
    <property type="project" value="InterPro"/>
</dbReference>
<dbReference type="GO" id="GO:0005524">
    <property type="term" value="F:ATP binding"/>
    <property type="evidence" value="ECO:0007669"/>
    <property type="project" value="UniProtKB-KW"/>
</dbReference>
<dbReference type="GO" id="GO:0016743">
    <property type="term" value="F:carboxyl- or carbamoyltransferase activity"/>
    <property type="evidence" value="ECO:0007669"/>
    <property type="project" value="UniProtKB-UniRule"/>
</dbReference>
<dbReference type="GO" id="GO:0006633">
    <property type="term" value="P:fatty acid biosynthetic process"/>
    <property type="evidence" value="ECO:0007669"/>
    <property type="project" value="UniProtKB-KW"/>
</dbReference>
<dbReference type="GO" id="GO:2001295">
    <property type="term" value="P:malonyl-CoA biosynthetic process"/>
    <property type="evidence" value="ECO:0007669"/>
    <property type="project" value="UniProtKB-UniRule"/>
</dbReference>
<dbReference type="Gene3D" id="3.90.226.10">
    <property type="entry name" value="2-enoyl-CoA Hydratase, Chain A, domain 1"/>
    <property type="match status" value="1"/>
</dbReference>
<dbReference type="HAMAP" id="MF_00823">
    <property type="entry name" value="AcetylCoA_CT_alpha"/>
    <property type="match status" value="1"/>
</dbReference>
<dbReference type="InterPro" id="IPR001095">
    <property type="entry name" value="Acetyl_CoA_COase_a_su"/>
</dbReference>
<dbReference type="InterPro" id="IPR029045">
    <property type="entry name" value="ClpP/crotonase-like_dom_sf"/>
</dbReference>
<dbReference type="InterPro" id="IPR011763">
    <property type="entry name" value="COA_CT_C"/>
</dbReference>
<dbReference type="NCBIfam" id="TIGR00513">
    <property type="entry name" value="accA"/>
    <property type="match status" value="1"/>
</dbReference>
<dbReference type="NCBIfam" id="NF041504">
    <property type="entry name" value="AccA_sub"/>
    <property type="match status" value="1"/>
</dbReference>
<dbReference type="NCBIfam" id="NF004344">
    <property type="entry name" value="PRK05724.1"/>
    <property type="match status" value="1"/>
</dbReference>
<dbReference type="PANTHER" id="PTHR42853">
    <property type="entry name" value="ACETYL-COENZYME A CARBOXYLASE CARBOXYL TRANSFERASE SUBUNIT ALPHA"/>
    <property type="match status" value="1"/>
</dbReference>
<dbReference type="PANTHER" id="PTHR42853:SF3">
    <property type="entry name" value="ACETYL-COENZYME A CARBOXYLASE CARBOXYL TRANSFERASE SUBUNIT ALPHA, CHLOROPLASTIC"/>
    <property type="match status" value="1"/>
</dbReference>
<dbReference type="Pfam" id="PF03255">
    <property type="entry name" value="ACCA"/>
    <property type="match status" value="1"/>
</dbReference>
<dbReference type="PRINTS" id="PR01069">
    <property type="entry name" value="ACCCTRFRASEA"/>
</dbReference>
<dbReference type="SUPFAM" id="SSF52096">
    <property type="entry name" value="ClpP/crotonase"/>
    <property type="match status" value="1"/>
</dbReference>
<dbReference type="PROSITE" id="PS50989">
    <property type="entry name" value="COA_CT_CTER"/>
    <property type="match status" value="1"/>
</dbReference>
<name>ACCA_CAMJD</name>
<reference key="1">
    <citation type="submission" date="2007-07" db="EMBL/GenBank/DDBJ databases">
        <title>Complete genome sequence of Campylobacter jejuni subsp doylei 269.97 isolated from human blood.</title>
        <authorList>
            <person name="Fouts D.E."/>
            <person name="Mongodin E.F."/>
            <person name="Puiu D."/>
            <person name="Sebastian Y."/>
            <person name="Miller W.G."/>
            <person name="Mandrell R.E."/>
            <person name="Lastovica A.J."/>
            <person name="Nelson K.E."/>
        </authorList>
    </citation>
    <scope>NUCLEOTIDE SEQUENCE [LARGE SCALE GENOMIC DNA]</scope>
    <source>
        <strain>ATCC BAA-1458 / RM4099 / 269.97</strain>
    </source>
</reference>
<feature type="chain" id="PRO_1000062600" description="Acetyl-coenzyme A carboxylase carboxyl transferase subunit alpha">
    <location>
        <begin position="1"/>
        <end position="312"/>
    </location>
</feature>
<feature type="domain" description="CoA carboxyltransferase C-terminal" evidence="2">
    <location>
        <begin position="36"/>
        <end position="286"/>
    </location>
</feature>
<gene>
    <name evidence="1" type="primary">accA</name>
    <name type="ordered locus">JJD26997_1494</name>
</gene>
<sequence>MASYLDFEKNIQQIDEDIINAQIKGDTEAVSILKKNLEKEISKTYKNLSDFQRLQLARHPDRPYTLDYIELILNDAHEIHGDRAFRDDPAIVCFMGYLGEKKIIVIGEQKGRGTKDKIARNFGMPHPEGYRKALRVARLAEKFQIPILFLIDTPGAYPGIGAEERGQSEAIARNLYELSDLKIPTIAIVIGEGGSGGALAIGVADRLAMMKNSVFSVISPEGCAAILWNDPAKSEAATKAMKVTADDLKSQGLIDDVIDEPTNGAHRNKEAAAVAIADYVKKSLNELENIDVRELSANRMQKILKLGAYQEA</sequence>
<comment type="function">
    <text evidence="1">Component of the acetyl coenzyme A carboxylase (ACC) complex. First, biotin carboxylase catalyzes the carboxylation of biotin on its carrier protein (BCCP) and then the CO(2) group is transferred by the carboxyltransferase to acetyl-CoA to form malonyl-CoA.</text>
</comment>
<comment type="catalytic activity">
    <reaction evidence="1">
        <text>N(6)-carboxybiotinyl-L-lysyl-[protein] + acetyl-CoA = N(6)-biotinyl-L-lysyl-[protein] + malonyl-CoA</text>
        <dbReference type="Rhea" id="RHEA:54728"/>
        <dbReference type="Rhea" id="RHEA-COMP:10505"/>
        <dbReference type="Rhea" id="RHEA-COMP:10506"/>
        <dbReference type="ChEBI" id="CHEBI:57288"/>
        <dbReference type="ChEBI" id="CHEBI:57384"/>
        <dbReference type="ChEBI" id="CHEBI:83144"/>
        <dbReference type="ChEBI" id="CHEBI:83145"/>
        <dbReference type="EC" id="2.1.3.15"/>
    </reaction>
</comment>
<comment type="pathway">
    <text evidence="1">Lipid metabolism; malonyl-CoA biosynthesis; malonyl-CoA from acetyl-CoA: step 1/1.</text>
</comment>
<comment type="subunit">
    <text evidence="1">Acetyl-CoA carboxylase is a heterohexamer composed of biotin carboxyl carrier protein (AccB), biotin carboxylase (AccC) and two subunits each of ACCase subunit alpha (AccA) and ACCase subunit beta (AccD).</text>
</comment>
<comment type="subcellular location">
    <subcellularLocation>
        <location evidence="1">Cytoplasm</location>
    </subcellularLocation>
</comment>
<comment type="similarity">
    <text evidence="1">Belongs to the AccA family.</text>
</comment>
<proteinExistence type="inferred from homology"/>